<keyword id="KW-0963">Cytoplasm</keyword>
<keyword id="KW-0448">Lipopolysaccharide biosynthesis</keyword>
<keyword id="KW-0548">Nucleotidyltransferase</keyword>
<keyword id="KW-0808">Transferase</keyword>
<proteinExistence type="inferred from homology"/>
<gene>
    <name evidence="1" type="primary">kdsB</name>
    <name type="ordered locus">RAF_ORF0485</name>
</gene>
<feature type="chain" id="PRO_1000202346" description="3-deoxy-manno-octulosonate cytidylyltransferase">
    <location>
        <begin position="1"/>
        <end position="246"/>
    </location>
</feature>
<organism>
    <name type="scientific">Rickettsia africae (strain ESF-5)</name>
    <dbReference type="NCBI Taxonomy" id="347255"/>
    <lineage>
        <taxon>Bacteria</taxon>
        <taxon>Pseudomonadati</taxon>
        <taxon>Pseudomonadota</taxon>
        <taxon>Alphaproteobacteria</taxon>
        <taxon>Rickettsiales</taxon>
        <taxon>Rickettsiaceae</taxon>
        <taxon>Rickettsieae</taxon>
        <taxon>Rickettsia</taxon>
        <taxon>spotted fever group</taxon>
    </lineage>
</organism>
<comment type="function">
    <text evidence="1">Activates KDO (a required 8-carbon sugar) for incorporation into bacterial lipopolysaccharide in Gram-negative bacteria.</text>
</comment>
<comment type="catalytic activity">
    <reaction evidence="1">
        <text>3-deoxy-alpha-D-manno-oct-2-ulosonate + CTP = CMP-3-deoxy-beta-D-manno-octulosonate + diphosphate</text>
        <dbReference type="Rhea" id="RHEA:23448"/>
        <dbReference type="ChEBI" id="CHEBI:33019"/>
        <dbReference type="ChEBI" id="CHEBI:37563"/>
        <dbReference type="ChEBI" id="CHEBI:85986"/>
        <dbReference type="ChEBI" id="CHEBI:85987"/>
        <dbReference type="EC" id="2.7.7.38"/>
    </reaction>
</comment>
<comment type="pathway">
    <text evidence="1">Nucleotide-sugar biosynthesis; CMP-3-deoxy-D-manno-octulosonate biosynthesis; CMP-3-deoxy-D-manno-octulosonate from 3-deoxy-D-manno-octulosonate and CTP: step 1/1.</text>
</comment>
<comment type="pathway">
    <text evidence="1">Bacterial outer membrane biogenesis; lipopolysaccharide biosynthesis.</text>
</comment>
<comment type="subcellular location">
    <subcellularLocation>
        <location evidence="1">Cytoplasm</location>
    </subcellularLocation>
</comment>
<comment type="similarity">
    <text evidence="1">Belongs to the KdsB family.</text>
</comment>
<dbReference type="EC" id="2.7.7.38" evidence="1"/>
<dbReference type="EMBL" id="CP001612">
    <property type="protein sequence ID" value="ACP53406.1"/>
    <property type="molecule type" value="Genomic_DNA"/>
</dbReference>
<dbReference type="RefSeq" id="WP_012719635.1">
    <property type="nucleotide sequence ID" value="NC_012633.1"/>
</dbReference>
<dbReference type="SMR" id="C3PN96"/>
<dbReference type="KEGG" id="raf:RAF_ORF0485"/>
<dbReference type="HOGENOM" id="CLU_065038_0_1_5"/>
<dbReference type="UniPathway" id="UPA00030"/>
<dbReference type="UniPathway" id="UPA00358">
    <property type="reaction ID" value="UER00476"/>
</dbReference>
<dbReference type="Proteomes" id="UP000002305">
    <property type="component" value="Chromosome"/>
</dbReference>
<dbReference type="GO" id="GO:0005829">
    <property type="term" value="C:cytosol"/>
    <property type="evidence" value="ECO:0007669"/>
    <property type="project" value="TreeGrafter"/>
</dbReference>
<dbReference type="GO" id="GO:0008690">
    <property type="term" value="F:3-deoxy-manno-octulosonate cytidylyltransferase activity"/>
    <property type="evidence" value="ECO:0007669"/>
    <property type="project" value="UniProtKB-UniRule"/>
</dbReference>
<dbReference type="GO" id="GO:0033468">
    <property type="term" value="P:CMP-keto-3-deoxy-D-manno-octulosonic acid biosynthetic process"/>
    <property type="evidence" value="ECO:0007669"/>
    <property type="project" value="UniProtKB-UniRule"/>
</dbReference>
<dbReference type="GO" id="GO:0009103">
    <property type="term" value="P:lipopolysaccharide biosynthetic process"/>
    <property type="evidence" value="ECO:0007669"/>
    <property type="project" value="UniProtKB-UniRule"/>
</dbReference>
<dbReference type="CDD" id="cd02517">
    <property type="entry name" value="CMP-KDO-Synthetase"/>
    <property type="match status" value="1"/>
</dbReference>
<dbReference type="Gene3D" id="3.90.550.10">
    <property type="entry name" value="Spore Coat Polysaccharide Biosynthesis Protein SpsA, Chain A"/>
    <property type="match status" value="1"/>
</dbReference>
<dbReference type="HAMAP" id="MF_00057">
    <property type="entry name" value="KdsB"/>
    <property type="match status" value="1"/>
</dbReference>
<dbReference type="InterPro" id="IPR003329">
    <property type="entry name" value="Cytidylyl_trans"/>
</dbReference>
<dbReference type="InterPro" id="IPR004528">
    <property type="entry name" value="KdsB"/>
</dbReference>
<dbReference type="InterPro" id="IPR029044">
    <property type="entry name" value="Nucleotide-diphossugar_trans"/>
</dbReference>
<dbReference type="NCBIfam" id="TIGR00466">
    <property type="entry name" value="kdsB"/>
    <property type="match status" value="1"/>
</dbReference>
<dbReference type="NCBIfam" id="NF003948">
    <property type="entry name" value="PRK05450.1-1"/>
    <property type="match status" value="1"/>
</dbReference>
<dbReference type="NCBIfam" id="NF003952">
    <property type="entry name" value="PRK05450.1-5"/>
    <property type="match status" value="1"/>
</dbReference>
<dbReference type="PANTHER" id="PTHR42866">
    <property type="entry name" value="3-DEOXY-MANNO-OCTULOSONATE CYTIDYLYLTRANSFERASE"/>
    <property type="match status" value="1"/>
</dbReference>
<dbReference type="PANTHER" id="PTHR42866:SF2">
    <property type="entry name" value="3-DEOXY-MANNO-OCTULOSONATE CYTIDYLYLTRANSFERASE, MITOCHONDRIAL"/>
    <property type="match status" value="1"/>
</dbReference>
<dbReference type="Pfam" id="PF02348">
    <property type="entry name" value="CTP_transf_3"/>
    <property type="match status" value="1"/>
</dbReference>
<dbReference type="SUPFAM" id="SSF53448">
    <property type="entry name" value="Nucleotide-diphospho-sugar transferases"/>
    <property type="match status" value="1"/>
</dbReference>
<evidence type="ECO:0000255" key="1">
    <source>
        <dbReference type="HAMAP-Rule" id="MF_00057"/>
    </source>
</evidence>
<reference key="1">
    <citation type="journal article" date="2009" name="BMC Genomics">
        <title>Analysis of the Rickettsia africae genome reveals that virulence acquisition in Rickettsia species may be explained by genome reduction.</title>
        <authorList>
            <person name="Fournier P.-E."/>
            <person name="El Karkouri K."/>
            <person name="Leroy Q."/>
            <person name="Robert C."/>
            <person name="Giumelli B."/>
            <person name="Renesto P."/>
            <person name="Socolovschi C."/>
            <person name="Parola P."/>
            <person name="Audic S."/>
            <person name="Raoult D."/>
        </authorList>
    </citation>
    <scope>NUCLEOTIDE SEQUENCE [LARGE SCALE GENOMIC DNA]</scope>
    <source>
        <strain>ESF-5</strain>
    </source>
</reference>
<protein>
    <recommendedName>
        <fullName evidence="1">3-deoxy-manno-octulosonate cytidylyltransferase</fullName>
        <ecNumber evidence="1">2.7.7.38</ecNumber>
    </recommendedName>
    <alternativeName>
        <fullName evidence="1">CMP-2-keto-3-deoxyoctulosonic acid synthase</fullName>
        <shortName evidence="1">CKS</shortName>
        <shortName evidence="1">CMP-KDO synthase</shortName>
    </alternativeName>
</protein>
<sequence length="246" mass="27463">MRHQDVAIIIPSRLSSTRLKQKPLQLIGSITLIERVFTQVNQAGLEHTYVATDSEEIASVITKVGGKVIFTDSAIPTGTDRTYEAFKLIPNNQNINYIVNVQGDMPFIEPSSILKIIEYLKNSKYDIVTPIVKVDRESVKASSNVTVAVDSAGTALYFSRSLIPNGAEEFLYHVGMYGFRKNALEKFVSLKPTFLEKTERLEQLRVLENGMTIGTCLVENVPISVDTEEDLKKAVKFYENISKLGL</sequence>
<accession>C3PN96</accession>
<name>KDSB_RICAE</name>